<organism>
    <name type="scientific">Bradyrhizobium sp. (strain ORS 278)</name>
    <dbReference type="NCBI Taxonomy" id="114615"/>
    <lineage>
        <taxon>Bacteria</taxon>
        <taxon>Pseudomonadati</taxon>
        <taxon>Pseudomonadota</taxon>
        <taxon>Alphaproteobacteria</taxon>
        <taxon>Hyphomicrobiales</taxon>
        <taxon>Nitrobacteraceae</taxon>
        <taxon>Bradyrhizobium</taxon>
    </lineage>
</organism>
<evidence type="ECO:0000255" key="1">
    <source>
        <dbReference type="HAMAP-Rule" id="MF_00008"/>
    </source>
</evidence>
<feature type="chain" id="PRO_1000000582" description="Thymidylate synthase">
    <location>
        <begin position="1"/>
        <end position="264"/>
    </location>
</feature>
<feature type="active site" description="Nucleophile" evidence="1">
    <location>
        <position position="146"/>
    </location>
</feature>
<feature type="binding site" description="in other chain" evidence="1">
    <location>
        <position position="21"/>
    </location>
    <ligand>
        <name>dUMP</name>
        <dbReference type="ChEBI" id="CHEBI:246422"/>
        <note>ligand shared between dimeric partners</note>
    </ligand>
</feature>
<feature type="binding site" evidence="1">
    <location>
        <begin position="126"/>
        <end position="127"/>
    </location>
    <ligand>
        <name>dUMP</name>
        <dbReference type="ChEBI" id="CHEBI:246422"/>
        <note>ligand shared between dimeric partners</note>
    </ligand>
</feature>
<feature type="binding site" description="in other chain" evidence="1">
    <location>
        <begin position="166"/>
        <end position="169"/>
    </location>
    <ligand>
        <name>dUMP</name>
        <dbReference type="ChEBI" id="CHEBI:246422"/>
        <note>ligand shared between dimeric partners</note>
    </ligand>
</feature>
<feature type="binding site" evidence="1">
    <location>
        <position position="169"/>
    </location>
    <ligand>
        <name>(6R)-5,10-methylene-5,6,7,8-tetrahydrofolate</name>
        <dbReference type="ChEBI" id="CHEBI:15636"/>
    </ligand>
</feature>
<feature type="binding site" description="in other chain" evidence="1">
    <location>
        <position position="177"/>
    </location>
    <ligand>
        <name>dUMP</name>
        <dbReference type="ChEBI" id="CHEBI:246422"/>
        <note>ligand shared between dimeric partners</note>
    </ligand>
</feature>
<feature type="binding site" description="in other chain" evidence="1">
    <location>
        <begin position="207"/>
        <end position="209"/>
    </location>
    <ligand>
        <name>dUMP</name>
        <dbReference type="ChEBI" id="CHEBI:246422"/>
        <note>ligand shared between dimeric partners</note>
    </ligand>
</feature>
<feature type="binding site" evidence="1">
    <location>
        <position position="263"/>
    </location>
    <ligand>
        <name>(6R)-5,10-methylene-5,6,7,8-tetrahydrofolate</name>
        <dbReference type="ChEBI" id="CHEBI:15636"/>
    </ligand>
</feature>
<protein>
    <recommendedName>
        <fullName evidence="1">Thymidylate synthase</fullName>
        <shortName evidence="1">TS</shortName>
        <shortName evidence="1">TSase</shortName>
        <ecNumber evidence="1">2.1.1.45</ecNumber>
    </recommendedName>
</protein>
<proteinExistence type="inferred from homology"/>
<dbReference type="EC" id="2.1.1.45" evidence="1"/>
<dbReference type="EMBL" id="CU234118">
    <property type="protein sequence ID" value="CAL79250.1"/>
    <property type="molecule type" value="Genomic_DNA"/>
</dbReference>
<dbReference type="RefSeq" id="WP_012029160.1">
    <property type="nucleotide sequence ID" value="NC_009445.1"/>
</dbReference>
<dbReference type="SMR" id="A4YZC4"/>
<dbReference type="STRING" id="114615.BRADO5578"/>
<dbReference type="KEGG" id="bra:BRADO5578"/>
<dbReference type="eggNOG" id="COG0207">
    <property type="taxonomic scope" value="Bacteria"/>
</dbReference>
<dbReference type="HOGENOM" id="CLU_021669_0_0_5"/>
<dbReference type="OrthoDB" id="9774633at2"/>
<dbReference type="UniPathway" id="UPA00575"/>
<dbReference type="Proteomes" id="UP000001994">
    <property type="component" value="Chromosome"/>
</dbReference>
<dbReference type="GO" id="GO:0005829">
    <property type="term" value="C:cytosol"/>
    <property type="evidence" value="ECO:0007669"/>
    <property type="project" value="TreeGrafter"/>
</dbReference>
<dbReference type="GO" id="GO:0004799">
    <property type="term" value="F:thymidylate synthase activity"/>
    <property type="evidence" value="ECO:0007669"/>
    <property type="project" value="UniProtKB-UniRule"/>
</dbReference>
<dbReference type="GO" id="GO:0006231">
    <property type="term" value="P:dTMP biosynthetic process"/>
    <property type="evidence" value="ECO:0007669"/>
    <property type="project" value="UniProtKB-UniRule"/>
</dbReference>
<dbReference type="GO" id="GO:0006235">
    <property type="term" value="P:dTTP biosynthetic process"/>
    <property type="evidence" value="ECO:0007669"/>
    <property type="project" value="UniProtKB-UniRule"/>
</dbReference>
<dbReference type="GO" id="GO:0032259">
    <property type="term" value="P:methylation"/>
    <property type="evidence" value="ECO:0007669"/>
    <property type="project" value="UniProtKB-KW"/>
</dbReference>
<dbReference type="CDD" id="cd00351">
    <property type="entry name" value="TS_Pyrimidine_HMase"/>
    <property type="match status" value="1"/>
</dbReference>
<dbReference type="FunFam" id="3.30.572.10:FF:000001">
    <property type="entry name" value="Thymidylate synthase"/>
    <property type="match status" value="1"/>
</dbReference>
<dbReference type="Gene3D" id="3.30.572.10">
    <property type="entry name" value="Thymidylate synthase/dCMP hydroxymethylase domain"/>
    <property type="match status" value="1"/>
</dbReference>
<dbReference type="HAMAP" id="MF_00008">
    <property type="entry name" value="Thymidy_synth_bact"/>
    <property type="match status" value="1"/>
</dbReference>
<dbReference type="InterPro" id="IPR045097">
    <property type="entry name" value="Thymidate_synth/dCMP_Mease"/>
</dbReference>
<dbReference type="InterPro" id="IPR023451">
    <property type="entry name" value="Thymidate_synth/dCMP_Mease_dom"/>
</dbReference>
<dbReference type="InterPro" id="IPR036926">
    <property type="entry name" value="Thymidate_synth/dCMP_Mease_sf"/>
</dbReference>
<dbReference type="InterPro" id="IPR000398">
    <property type="entry name" value="Thymidylate_synthase"/>
</dbReference>
<dbReference type="InterPro" id="IPR020940">
    <property type="entry name" value="Thymidylate_synthase_AS"/>
</dbReference>
<dbReference type="NCBIfam" id="NF002497">
    <property type="entry name" value="PRK01827.1-3"/>
    <property type="match status" value="1"/>
</dbReference>
<dbReference type="NCBIfam" id="NF002499">
    <property type="entry name" value="PRK01827.1-5"/>
    <property type="match status" value="1"/>
</dbReference>
<dbReference type="NCBIfam" id="TIGR03284">
    <property type="entry name" value="thym_sym"/>
    <property type="match status" value="2"/>
</dbReference>
<dbReference type="PANTHER" id="PTHR11548:SF9">
    <property type="entry name" value="THYMIDYLATE SYNTHASE"/>
    <property type="match status" value="1"/>
</dbReference>
<dbReference type="PANTHER" id="PTHR11548">
    <property type="entry name" value="THYMIDYLATE SYNTHASE 1"/>
    <property type="match status" value="1"/>
</dbReference>
<dbReference type="Pfam" id="PF00303">
    <property type="entry name" value="Thymidylat_synt"/>
    <property type="match status" value="1"/>
</dbReference>
<dbReference type="PRINTS" id="PR00108">
    <property type="entry name" value="THYMDSNTHASE"/>
</dbReference>
<dbReference type="SUPFAM" id="SSF55831">
    <property type="entry name" value="Thymidylate synthase/dCMP hydroxymethylase"/>
    <property type="match status" value="1"/>
</dbReference>
<dbReference type="PROSITE" id="PS00091">
    <property type="entry name" value="THYMIDYLATE_SYNTHASE"/>
    <property type="match status" value="1"/>
</dbReference>
<sequence>MHQYHDLLERILSDGAQKHDRTGTGTLSVFGHQMRFNLAAGFPMVTTKRLPLKAIVHELLWFLKGDTNIKYLHDHGVTIWDEWADANGDLGPVYGYQWRSWPTSDGGQIDQISNVVDMIRRNPDSRRLIVTAWNPADVEKMALPPCHCLFQFYVANGKLSCQLYQRSADVFLGVPFNIASYALLTMMVAQVTGLKLGEFVHSFGDVHLYSNHIEQARLQLSRTPRPLPTMTLNPDVKDIFAFRYEDFALAGYDPHPHIKAEVAV</sequence>
<comment type="function">
    <text evidence="1">Catalyzes the reductive methylation of 2'-deoxyuridine-5'-monophosphate (dUMP) to 2'-deoxythymidine-5'-monophosphate (dTMP) while utilizing 5,10-methylenetetrahydrofolate (mTHF) as the methyl donor and reductant in the reaction, yielding dihydrofolate (DHF) as a by-product. This enzymatic reaction provides an intracellular de novo source of dTMP, an essential precursor for DNA biosynthesis.</text>
</comment>
<comment type="catalytic activity">
    <reaction evidence="1">
        <text>dUMP + (6R)-5,10-methylene-5,6,7,8-tetrahydrofolate = 7,8-dihydrofolate + dTMP</text>
        <dbReference type="Rhea" id="RHEA:12104"/>
        <dbReference type="ChEBI" id="CHEBI:15636"/>
        <dbReference type="ChEBI" id="CHEBI:57451"/>
        <dbReference type="ChEBI" id="CHEBI:63528"/>
        <dbReference type="ChEBI" id="CHEBI:246422"/>
        <dbReference type="EC" id="2.1.1.45"/>
    </reaction>
</comment>
<comment type="pathway">
    <text evidence="1">Pyrimidine metabolism; dTTP biosynthesis.</text>
</comment>
<comment type="subunit">
    <text evidence="1">Homodimer.</text>
</comment>
<comment type="subcellular location">
    <subcellularLocation>
        <location evidence="1">Cytoplasm</location>
    </subcellularLocation>
</comment>
<comment type="similarity">
    <text evidence="1">Belongs to the thymidylate synthase family. Bacterial-type ThyA subfamily.</text>
</comment>
<keyword id="KW-0963">Cytoplasm</keyword>
<keyword id="KW-0489">Methyltransferase</keyword>
<keyword id="KW-0545">Nucleotide biosynthesis</keyword>
<keyword id="KW-1185">Reference proteome</keyword>
<keyword id="KW-0808">Transferase</keyword>
<reference key="1">
    <citation type="journal article" date="2007" name="Science">
        <title>Legumes symbioses: absence of nod genes in photosynthetic bradyrhizobia.</title>
        <authorList>
            <person name="Giraud E."/>
            <person name="Moulin L."/>
            <person name="Vallenet D."/>
            <person name="Barbe V."/>
            <person name="Cytryn E."/>
            <person name="Avarre J.-C."/>
            <person name="Jaubert M."/>
            <person name="Simon D."/>
            <person name="Cartieaux F."/>
            <person name="Prin Y."/>
            <person name="Bena G."/>
            <person name="Hannibal L."/>
            <person name="Fardoux J."/>
            <person name="Kojadinovic M."/>
            <person name="Vuillet L."/>
            <person name="Lajus A."/>
            <person name="Cruveiller S."/>
            <person name="Rouy Z."/>
            <person name="Mangenot S."/>
            <person name="Segurens B."/>
            <person name="Dossat C."/>
            <person name="Franck W.L."/>
            <person name="Chang W.-S."/>
            <person name="Saunders E."/>
            <person name="Bruce D."/>
            <person name="Richardson P."/>
            <person name="Normand P."/>
            <person name="Dreyfus B."/>
            <person name="Pignol D."/>
            <person name="Stacey G."/>
            <person name="Emerich D."/>
            <person name="Vermeglio A."/>
            <person name="Medigue C."/>
            <person name="Sadowsky M."/>
        </authorList>
    </citation>
    <scope>NUCLEOTIDE SEQUENCE [LARGE SCALE GENOMIC DNA]</scope>
    <source>
        <strain>ORS 278</strain>
    </source>
</reference>
<accession>A4YZC4</accession>
<name>TYSY_BRASO</name>
<gene>
    <name evidence="1" type="primary">thyA</name>
    <name type="ordered locus">BRADO5578</name>
</gene>